<comment type="function">
    <text evidence="1">Required for rescue of stalled ribosomes mediated by trans-translation. Binds to transfer-messenger RNA (tmRNA), required for stable association of tmRNA with ribosomes. tmRNA and SmpB together mimic tRNA shape, replacing the anticodon stem-loop with SmpB. tmRNA is encoded by the ssrA gene; the 2 termini fold to resemble tRNA(Ala) and it encodes a 'tag peptide', a short internal open reading frame. During trans-translation Ala-aminoacylated tmRNA acts like a tRNA, entering the A-site of stalled ribosomes, displacing the stalled mRNA. The ribosome then switches to translate the ORF on the tmRNA; the nascent peptide is terminated with the 'tag peptide' encoded by the tmRNA and targeted for degradation. The ribosome is freed to recommence translation, which seems to be the essential function of trans-translation.</text>
</comment>
<comment type="subcellular location">
    <subcellularLocation>
        <location evidence="1">Cytoplasm</location>
    </subcellularLocation>
    <text evidence="1">The tmRNA-SmpB complex associates with stalled 70S ribosomes.</text>
</comment>
<comment type="similarity">
    <text evidence="1">Belongs to the SmpB family.</text>
</comment>
<name>SSRP_BRUA4</name>
<sequence>MNKPKNSPVRKIIAENRKARFNFEILDTLEAGLVLTGTEVKSLRANQSNIAESYASFENGEFWLINSYIPEYTQGNRFNHEPRRLRKLLISKREMSRLFNSVSRDGMTVVPLKLYFNDRGRAKLELALARGKKTHDKRETEKKRDWNREKARLMRDKG</sequence>
<feature type="chain" id="PRO_1000002097" description="SsrA-binding protein">
    <location>
        <begin position="1"/>
        <end position="158"/>
    </location>
</feature>
<feature type="region of interest" description="Disordered" evidence="2">
    <location>
        <begin position="132"/>
        <end position="158"/>
    </location>
</feature>
<feature type="compositionally biased region" description="Basic and acidic residues" evidence="2">
    <location>
        <begin position="136"/>
        <end position="158"/>
    </location>
</feature>
<proteinExistence type="inferred from homology"/>
<dbReference type="EMBL" id="CP000758">
    <property type="protein sequence ID" value="ABS15353.1"/>
    <property type="molecule type" value="Genomic_DNA"/>
</dbReference>
<dbReference type="RefSeq" id="WP_010661627.1">
    <property type="nucleotide sequence ID" value="NC_009667.1"/>
</dbReference>
<dbReference type="SMR" id="A6X299"/>
<dbReference type="STRING" id="439375.Oant_2640"/>
<dbReference type="GeneID" id="61316901"/>
<dbReference type="KEGG" id="oan:Oant_2640"/>
<dbReference type="eggNOG" id="COG0691">
    <property type="taxonomic scope" value="Bacteria"/>
</dbReference>
<dbReference type="HOGENOM" id="CLU_108953_0_1_5"/>
<dbReference type="PhylomeDB" id="A6X299"/>
<dbReference type="Proteomes" id="UP000002301">
    <property type="component" value="Chromosome 1"/>
</dbReference>
<dbReference type="GO" id="GO:0005829">
    <property type="term" value="C:cytosol"/>
    <property type="evidence" value="ECO:0007669"/>
    <property type="project" value="TreeGrafter"/>
</dbReference>
<dbReference type="GO" id="GO:0003723">
    <property type="term" value="F:RNA binding"/>
    <property type="evidence" value="ECO:0007669"/>
    <property type="project" value="UniProtKB-UniRule"/>
</dbReference>
<dbReference type="GO" id="GO:0070929">
    <property type="term" value="P:trans-translation"/>
    <property type="evidence" value="ECO:0007669"/>
    <property type="project" value="UniProtKB-UniRule"/>
</dbReference>
<dbReference type="CDD" id="cd09294">
    <property type="entry name" value="SmpB"/>
    <property type="match status" value="1"/>
</dbReference>
<dbReference type="Gene3D" id="2.40.280.10">
    <property type="match status" value="1"/>
</dbReference>
<dbReference type="HAMAP" id="MF_00023">
    <property type="entry name" value="SmpB"/>
    <property type="match status" value="1"/>
</dbReference>
<dbReference type="InterPro" id="IPR023620">
    <property type="entry name" value="SmpB"/>
</dbReference>
<dbReference type="InterPro" id="IPR000037">
    <property type="entry name" value="SsrA-bd_prot"/>
</dbReference>
<dbReference type="InterPro" id="IPR020081">
    <property type="entry name" value="SsrA-bd_prot_CS"/>
</dbReference>
<dbReference type="NCBIfam" id="NF003843">
    <property type="entry name" value="PRK05422.1"/>
    <property type="match status" value="1"/>
</dbReference>
<dbReference type="NCBIfam" id="TIGR00086">
    <property type="entry name" value="smpB"/>
    <property type="match status" value="1"/>
</dbReference>
<dbReference type="PANTHER" id="PTHR30308:SF2">
    <property type="entry name" value="SSRA-BINDING PROTEIN"/>
    <property type="match status" value="1"/>
</dbReference>
<dbReference type="PANTHER" id="PTHR30308">
    <property type="entry name" value="TMRNA-BINDING COMPONENT OF TRANS-TRANSLATION TAGGING COMPLEX"/>
    <property type="match status" value="1"/>
</dbReference>
<dbReference type="Pfam" id="PF01668">
    <property type="entry name" value="SmpB"/>
    <property type="match status" value="1"/>
</dbReference>
<dbReference type="SUPFAM" id="SSF74982">
    <property type="entry name" value="Small protein B (SmpB)"/>
    <property type="match status" value="1"/>
</dbReference>
<dbReference type="PROSITE" id="PS01317">
    <property type="entry name" value="SSRP"/>
    <property type="match status" value="1"/>
</dbReference>
<evidence type="ECO:0000255" key="1">
    <source>
        <dbReference type="HAMAP-Rule" id="MF_00023"/>
    </source>
</evidence>
<evidence type="ECO:0000256" key="2">
    <source>
        <dbReference type="SAM" id="MobiDB-lite"/>
    </source>
</evidence>
<gene>
    <name evidence="1" type="primary">smpB</name>
    <name type="ordered locus">Oant_2640</name>
</gene>
<keyword id="KW-0963">Cytoplasm</keyword>
<keyword id="KW-1185">Reference proteome</keyword>
<keyword id="KW-0694">RNA-binding</keyword>
<protein>
    <recommendedName>
        <fullName evidence="1">SsrA-binding protein</fullName>
    </recommendedName>
    <alternativeName>
        <fullName evidence="1">Small protein B</fullName>
    </alternativeName>
</protein>
<organism>
    <name type="scientific">Brucella anthropi (strain ATCC 49188 / DSM 6882 / CCUG 24695 / JCM 21032 / LMG 3331 / NBRC 15819 / NCTC 12168 / Alc 37)</name>
    <name type="common">Ochrobactrum anthropi</name>
    <dbReference type="NCBI Taxonomy" id="439375"/>
    <lineage>
        <taxon>Bacteria</taxon>
        <taxon>Pseudomonadati</taxon>
        <taxon>Pseudomonadota</taxon>
        <taxon>Alphaproteobacteria</taxon>
        <taxon>Hyphomicrobiales</taxon>
        <taxon>Brucellaceae</taxon>
        <taxon>Brucella/Ochrobactrum group</taxon>
        <taxon>Brucella</taxon>
    </lineage>
</organism>
<accession>A6X299</accession>
<reference key="1">
    <citation type="journal article" date="2011" name="J. Bacteriol.">
        <title>Genome of Ochrobactrum anthropi ATCC 49188 T, a versatile opportunistic pathogen and symbiont of several eukaryotic hosts.</title>
        <authorList>
            <person name="Chain P.S."/>
            <person name="Lang D.M."/>
            <person name="Comerci D.J."/>
            <person name="Malfatti S.A."/>
            <person name="Vergez L.M."/>
            <person name="Shin M."/>
            <person name="Ugalde R.A."/>
            <person name="Garcia E."/>
            <person name="Tolmasky M.E."/>
        </authorList>
    </citation>
    <scope>NUCLEOTIDE SEQUENCE [LARGE SCALE GENOMIC DNA]</scope>
    <source>
        <strain>ATCC 49188 / DSM 6882 / CCUG 24695 / JCM 21032 / LMG 3331 / NBRC 15819 / NCTC 12168 / Alc 37</strain>
    </source>
</reference>